<name>RFBC_SALBO</name>
<evidence type="ECO:0000250" key="1"/>
<evidence type="ECO:0000305" key="2"/>
<accession>P52642</accession>
<organism>
    <name type="scientific">Salmonella borreze</name>
    <dbReference type="NCBI Taxonomy" id="55400"/>
    <lineage>
        <taxon>Bacteria</taxon>
        <taxon>Pseudomonadati</taxon>
        <taxon>Pseudomonadota</taxon>
        <taxon>Gammaproteobacteria</taxon>
        <taxon>Enterobacterales</taxon>
        <taxon>Enterobacteriaceae</taxon>
        <taxon>Salmonella</taxon>
    </lineage>
</organism>
<comment type="catalytic activity">
    <reaction>
        <text>UDP-N-acetyl-alpha-D-glucosamine = UDP-N-acetyl-alpha-D-mannosamine</text>
        <dbReference type="Rhea" id="RHEA:17213"/>
        <dbReference type="ChEBI" id="CHEBI:57705"/>
        <dbReference type="ChEBI" id="CHEBI:68623"/>
        <dbReference type="EC" id="5.1.3.14"/>
    </reaction>
</comment>
<comment type="pathway">
    <text>Bacterial outer membrane biogenesis; LPS O-antigen biosynthesis.</text>
</comment>
<comment type="similarity">
    <text evidence="2">Belongs to the UDP-N-acetylglucosamine 2-epimerase family.</text>
</comment>
<proteinExistence type="inferred from homology"/>
<gene>
    <name type="primary">rfbC</name>
</gene>
<sequence length="378" mass="42495">MSKVLFVFGTRPEAIKMAPLVIEFKNNPAIEVKVCVTGQHREMLDQVLDFFEIEPDYDLNIMKQKQSLGSITCSILTRLDEILASFMPAHIFVHGDTTTTFAASLAAFYQNIKVWHIEAGLRTWNMNSPFPEEGNRQLTSKLAFFHAAPTLQAKDNLLRESVKEKNIIVTGNTVIDALLIGIKKITGSTGDVREIISLKNKLNLDKKIILVTLHRRENQGELLRTICDDIKQLALEHDDIEIVFPVHMSPRIREVVNEKLSGVVNIKLVEPLAYPGFIWLMNNAHFILSDSGGVQEEAPSLQKPVLVARDTTERPEVIENGAAMLVDPRIPNNIYSSCKKLLSDERLYEKMSQAGNPFGDGKASKKILDYFVSLEDIK</sequence>
<feature type="chain" id="PRO_0000208526" description="UDP-N-acetylglucosamine 2-epimerase">
    <location>
        <begin position="1"/>
        <end position="378"/>
    </location>
</feature>
<feature type="active site" evidence="1">
    <location>
        <position position="214"/>
    </location>
</feature>
<protein>
    <recommendedName>
        <fullName>UDP-N-acetylglucosamine 2-epimerase</fullName>
        <ecNumber>5.1.3.14</ecNumber>
    </recommendedName>
    <alternativeName>
        <fullName>UDP-GlcNAc-2-epimerase</fullName>
    </alternativeName>
</protein>
<reference key="1">
    <citation type="journal article" date="1995" name="J. Bacteriol.">
        <title>Lateral transfer of rfb genes: a mobilizable ColE1-type plasmid carries the rfbO:54 (O:54 antigen biosynthesis) gene cluster from Salmonella enterica serovar Borreze.</title>
        <authorList>
            <person name="Keenleyside W.J."/>
            <person name="Whitfield C."/>
        </authorList>
    </citation>
    <scope>NUCLEOTIDE SEQUENCE [GENOMIC DNA]</scope>
</reference>
<keyword id="KW-0413">Isomerase</keyword>
<keyword id="KW-0448">Lipopolysaccharide biosynthesis</keyword>
<keyword id="KW-0614">Plasmid</keyword>
<dbReference type="EC" id="5.1.3.14"/>
<dbReference type="EMBL" id="L39794">
    <property type="protein sequence ID" value="AAC98403.1"/>
    <property type="molecule type" value="Genomic_DNA"/>
</dbReference>
<dbReference type="SMR" id="P52642"/>
<dbReference type="BioCyc" id="MetaCyc:MONOMER-21446"/>
<dbReference type="UniPathway" id="UPA00281"/>
<dbReference type="GO" id="GO:0008761">
    <property type="term" value="F:UDP-N-acetylglucosamine 2-epimerase activity"/>
    <property type="evidence" value="ECO:0007669"/>
    <property type="project" value="UniProtKB-EC"/>
</dbReference>
<dbReference type="GO" id="GO:0009243">
    <property type="term" value="P:O antigen biosynthetic process"/>
    <property type="evidence" value="ECO:0007669"/>
    <property type="project" value="UniProtKB-UniPathway"/>
</dbReference>
<dbReference type="CDD" id="cd03786">
    <property type="entry name" value="GTB_UDP-GlcNAc_2-Epimerase"/>
    <property type="match status" value="1"/>
</dbReference>
<dbReference type="FunFam" id="3.40.50.2000:FF:000043">
    <property type="entry name" value="UDP-N-acetylglucosamine 2-epimerase"/>
    <property type="match status" value="1"/>
</dbReference>
<dbReference type="Gene3D" id="3.40.50.2000">
    <property type="entry name" value="Glycogen Phosphorylase B"/>
    <property type="match status" value="2"/>
</dbReference>
<dbReference type="InterPro" id="IPR003331">
    <property type="entry name" value="UDP_GlcNAc_Epimerase_2_dom"/>
</dbReference>
<dbReference type="InterPro" id="IPR029767">
    <property type="entry name" value="WecB-like"/>
</dbReference>
<dbReference type="NCBIfam" id="TIGR00236">
    <property type="entry name" value="wecB"/>
    <property type="match status" value="1"/>
</dbReference>
<dbReference type="PANTHER" id="PTHR43174">
    <property type="entry name" value="UDP-N-ACETYLGLUCOSAMINE 2-EPIMERASE"/>
    <property type="match status" value="1"/>
</dbReference>
<dbReference type="PANTHER" id="PTHR43174:SF2">
    <property type="entry name" value="UDP-N-ACETYLGLUCOSAMINE 2-EPIMERASE"/>
    <property type="match status" value="1"/>
</dbReference>
<dbReference type="Pfam" id="PF02350">
    <property type="entry name" value="Epimerase_2"/>
    <property type="match status" value="1"/>
</dbReference>
<dbReference type="SUPFAM" id="SSF53756">
    <property type="entry name" value="UDP-Glycosyltransferase/glycogen phosphorylase"/>
    <property type="match status" value="1"/>
</dbReference>
<geneLocation type="plasmid">
    <name>pWQ799</name>
</geneLocation>